<accession>Q6CG11</accession>
<proteinExistence type="inferred from homology"/>
<reference key="1">
    <citation type="journal article" date="2004" name="Nature">
        <title>Genome evolution in yeasts.</title>
        <authorList>
            <person name="Dujon B."/>
            <person name="Sherman D."/>
            <person name="Fischer G."/>
            <person name="Durrens P."/>
            <person name="Casaregola S."/>
            <person name="Lafontaine I."/>
            <person name="de Montigny J."/>
            <person name="Marck C."/>
            <person name="Neuveglise C."/>
            <person name="Talla E."/>
            <person name="Goffard N."/>
            <person name="Frangeul L."/>
            <person name="Aigle M."/>
            <person name="Anthouard V."/>
            <person name="Babour A."/>
            <person name="Barbe V."/>
            <person name="Barnay S."/>
            <person name="Blanchin S."/>
            <person name="Beckerich J.-M."/>
            <person name="Beyne E."/>
            <person name="Bleykasten C."/>
            <person name="Boisrame A."/>
            <person name="Boyer J."/>
            <person name="Cattolico L."/>
            <person name="Confanioleri F."/>
            <person name="de Daruvar A."/>
            <person name="Despons L."/>
            <person name="Fabre E."/>
            <person name="Fairhead C."/>
            <person name="Ferry-Dumazet H."/>
            <person name="Groppi A."/>
            <person name="Hantraye F."/>
            <person name="Hennequin C."/>
            <person name="Jauniaux N."/>
            <person name="Joyet P."/>
            <person name="Kachouri R."/>
            <person name="Kerrest A."/>
            <person name="Koszul R."/>
            <person name="Lemaire M."/>
            <person name="Lesur I."/>
            <person name="Ma L."/>
            <person name="Muller H."/>
            <person name="Nicaud J.-M."/>
            <person name="Nikolski M."/>
            <person name="Oztas S."/>
            <person name="Ozier-Kalogeropoulos O."/>
            <person name="Pellenz S."/>
            <person name="Potier S."/>
            <person name="Richard G.-F."/>
            <person name="Straub M.-L."/>
            <person name="Suleau A."/>
            <person name="Swennen D."/>
            <person name="Tekaia F."/>
            <person name="Wesolowski-Louvel M."/>
            <person name="Westhof E."/>
            <person name="Wirth B."/>
            <person name="Zeniou-Meyer M."/>
            <person name="Zivanovic Y."/>
            <person name="Bolotin-Fukuhara M."/>
            <person name="Thierry A."/>
            <person name="Bouchier C."/>
            <person name="Caudron B."/>
            <person name="Scarpelli C."/>
            <person name="Gaillardin C."/>
            <person name="Weissenbach J."/>
            <person name="Wincker P."/>
            <person name="Souciet J.-L."/>
        </authorList>
    </citation>
    <scope>NUCLEOTIDE SEQUENCE [LARGE SCALE GENOMIC DNA]</scope>
    <source>
        <strain>CLIB 122 / E 150</strain>
    </source>
</reference>
<organism>
    <name type="scientific">Yarrowia lipolytica (strain CLIB 122 / E 150)</name>
    <name type="common">Yeast</name>
    <name type="synonym">Candida lipolytica</name>
    <dbReference type="NCBI Taxonomy" id="284591"/>
    <lineage>
        <taxon>Eukaryota</taxon>
        <taxon>Fungi</taxon>
        <taxon>Dikarya</taxon>
        <taxon>Ascomycota</taxon>
        <taxon>Saccharomycotina</taxon>
        <taxon>Dipodascomycetes</taxon>
        <taxon>Dipodascales</taxon>
        <taxon>Dipodascales incertae sedis</taxon>
        <taxon>Yarrowia</taxon>
    </lineage>
</organism>
<name>RIFK_YARLI</name>
<keyword id="KW-0067">ATP-binding</keyword>
<keyword id="KW-0285">Flavoprotein</keyword>
<keyword id="KW-0288">FMN</keyword>
<keyword id="KW-0418">Kinase</keyword>
<keyword id="KW-0460">Magnesium</keyword>
<keyword id="KW-0479">Metal-binding</keyword>
<keyword id="KW-0547">Nucleotide-binding</keyword>
<keyword id="KW-1185">Reference proteome</keyword>
<keyword id="KW-0808">Transferase</keyword>
<keyword id="KW-0862">Zinc</keyword>
<feature type="chain" id="PRO_0000301850" description="Riboflavin kinase">
    <location>
        <begin position="1"/>
        <end position="192"/>
    </location>
</feature>
<feature type="active site" description="Nucleophile" evidence="1">
    <location>
        <position position="129"/>
    </location>
</feature>
<feature type="binding site" evidence="2">
    <location>
        <position position="47"/>
    </location>
    <ligand>
        <name>Mg(2+)</name>
        <dbReference type="ChEBI" id="CHEBI:18420"/>
    </ligand>
</feature>
<feature type="binding site" evidence="2">
    <location>
        <position position="49"/>
    </location>
    <ligand>
        <name>Mg(2+)</name>
        <dbReference type="ChEBI" id="CHEBI:18420"/>
    </ligand>
</feature>
<gene>
    <name type="primary">FMN1</name>
    <name type="ordered locus">YALI0B01826g</name>
</gene>
<protein>
    <recommendedName>
        <fullName>Riboflavin kinase</fullName>
        <ecNumber>2.7.1.26</ecNumber>
    </recommendedName>
    <alternativeName>
        <fullName>Flavin mononucleotide kinase 1</fullName>
    </alternativeName>
</protein>
<comment type="function">
    <text evidence="1">Catalyzes the phosphorylation of riboflavin (vitamin B2) to form flavin mononucleotide (FMN) coenzyme.</text>
</comment>
<comment type="catalytic activity">
    <reaction>
        <text>riboflavin + ATP = FMN + ADP + H(+)</text>
        <dbReference type="Rhea" id="RHEA:14357"/>
        <dbReference type="ChEBI" id="CHEBI:15378"/>
        <dbReference type="ChEBI" id="CHEBI:30616"/>
        <dbReference type="ChEBI" id="CHEBI:57986"/>
        <dbReference type="ChEBI" id="CHEBI:58210"/>
        <dbReference type="ChEBI" id="CHEBI:456216"/>
        <dbReference type="EC" id="2.7.1.26"/>
    </reaction>
</comment>
<comment type="cofactor">
    <cofactor evidence="1">
        <name>Zn(2+)</name>
        <dbReference type="ChEBI" id="CHEBI:29105"/>
    </cofactor>
    <cofactor evidence="1">
        <name>Mg(2+)</name>
        <dbReference type="ChEBI" id="CHEBI:18420"/>
    </cofactor>
    <text evidence="1">Zinc or magnesium.</text>
</comment>
<comment type="pathway">
    <text>Cofactor biosynthesis; FMN biosynthesis; FMN from riboflavin (ATP route): step 1/1.</text>
</comment>
<comment type="similarity">
    <text evidence="3">Belongs to the flavokinase family.</text>
</comment>
<evidence type="ECO:0000250" key="1"/>
<evidence type="ECO:0000250" key="2">
    <source>
        <dbReference type="UniProtKB" id="Q969G6"/>
    </source>
</evidence>
<evidence type="ECO:0000305" key="3"/>
<dbReference type="EC" id="2.7.1.26"/>
<dbReference type="EMBL" id="CR382128">
    <property type="protein sequence ID" value="CAG82619.1"/>
    <property type="molecule type" value="Genomic_DNA"/>
</dbReference>
<dbReference type="RefSeq" id="XP_500401.1">
    <property type="nucleotide sequence ID" value="XM_500401.1"/>
</dbReference>
<dbReference type="SMR" id="Q6CG11"/>
<dbReference type="FunCoup" id="Q6CG11">
    <property type="interactions" value="402"/>
</dbReference>
<dbReference type="STRING" id="284591.Q6CG11"/>
<dbReference type="EnsemblFungi" id="CAG82619">
    <property type="protein sequence ID" value="CAG82619"/>
    <property type="gene ID" value="YALI0_B01826g"/>
</dbReference>
<dbReference type="KEGG" id="yli:2907158"/>
<dbReference type="VEuPathDB" id="FungiDB:YALI0_B01826g"/>
<dbReference type="HOGENOM" id="CLU_048437_3_2_1"/>
<dbReference type="InParanoid" id="Q6CG11"/>
<dbReference type="OMA" id="NGEVHKM"/>
<dbReference type="OrthoDB" id="1198at4891"/>
<dbReference type="UniPathway" id="UPA00276">
    <property type="reaction ID" value="UER00406"/>
</dbReference>
<dbReference type="Proteomes" id="UP000001300">
    <property type="component" value="Chromosome B"/>
</dbReference>
<dbReference type="GO" id="GO:0005743">
    <property type="term" value="C:mitochondrial inner membrane"/>
    <property type="evidence" value="ECO:0007669"/>
    <property type="project" value="EnsemblFungi"/>
</dbReference>
<dbReference type="GO" id="GO:0005739">
    <property type="term" value="C:mitochondrion"/>
    <property type="evidence" value="ECO:0000318"/>
    <property type="project" value="GO_Central"/>
</dbReference>
<dbReference type="GO" id="GO:0005524">
    <property type="term" value="F:ATP binding"/>
    <property type="evidence" value="ECO:0007669"/>
    <property type="project" value="UniProtKB-KW"/>
</dbReference>
<dbReference type="GO" id="GO:0046872">
    <property type="term" value="F:metal ion binding"/>
    <property type="evidence" value="ECO:0007669"/>
    <property type="project" value="UniProtKB-KW"/>
</dbReference>
<dbReference type="GO" id="GO:0008531">
    <property type="term" value="F:riboflavin kinase activity"/>
    <property type="evidence" value="ECO:0000318"/>
    <property type="project" value="GO_Central"/>
</dbReference>
<dbReference type="GO" id="GO:0009398">
    <property type="term" value="P:FMN biosynthetic process"/>
    <property type="evidence" value="ECO:0000318"/>
    <property type="project" value="GO_Central"/>
</dbReference>
<dbReference type="GO" id="GO:0009231">
    <property type="term" value="P:riboflavin biosynthetic process"/>
    <property type="evidence" value="ECO:0007669"/>
    <property type="project" value="InterPro"/>
</dbReference>
<dbReference type="GO" id="GO:0006771">
    <property type="term" value="P:riboflavin metabolic process"/>
    <property type="evidence" value="ECO:0000318"/>
    <property type="project" value="GO_Central"/>
</dbReference>
<dbReference type="Gene3D" id="2.40.30.30">
    <property type="entry name" value="Riboflavin kinase-like"/>
    <property type="match status" value="1"/>
</dbReference>
<dbReference type="InterPro" id="IPR023468">
    <property type="entry name" value="Riboflavin_kinase"/>
</dbReference>
<dbReference type="InterPro" id="IPR015865">
    <property type="entry name" value="Riboflavin_kinase_bac/euk"/>
</dbReference>
<dbReference type="InterPro" id="IPR023465">
    <property type="entry name" value="Riboflavin_kinase_dom_sf"/>
</dbReference>
<dbReference type="PANTHER" id="PTHR22749:SF6">
    <property type="entry name" value="RIBOFLAVIN KINASE"/>
    <property type="match status" value="1"/>
</dbReference>
<dbReference type="PANTHER" id="PTHR22749">
    <property type="entry name" value="RIBOFLAVIN KINASE/FMN ADENYLYLTRANSFERASE"/>
    <property type="match status" value="1"/>
</dbReference>
<dbReference type="Pfam" id="PF01687">
    <property type="entry name" value="Flavokinase"/>
    <property type="match status" value="1"/>
</dbReference>
<dbReference type="SMART" id="SM00904">
    <property type="entry name" value="Flavokinase"/>
    <property type="match status" value="1"/>
</dbReference>
<dbReference type="SUPFAM" id="SSF82114">
    <property type="entry name" value="Riboflavin kinase-like"/>
    <property type="match status" value="1"/>
</dbReference>
<sequence>MMISCTRTAILPLRRRLMTASTAYPIKFASSIIPGYGRGSADLGIPTANIPIDDVPVLDALDTGIYYGLVQILKTDKPSEKKTSEFQKDRVVDFQYTNKLNDQEINAVLPMVMSVGWNPFYKNDQKSAEIHIIHKFAHTFYGASIKVMVLGYLRPEKNFTSLEALVDEIHNDIKVSEEKMEGTREKKDQFWQ</sequence>